<reference key="1">
    <citation type="journal article" date="2009" name="PLoS Genet.">
        <title>Organised genome dynamics in the Escherichia coli species results in highly diverse adaptive paths.</title>
        <authorList>
            <person name="Touchon M."/>
            <person name="Hoede C."/>
            <person name="Tenaillon O."/>
            <person name="Barbe V."/>
            <person name="Baeriswyl S."/>
            <person name="Bidet P."/>
            <person name="Bingen E."/>
            <person name="Bonacorsi S."/>
            <person name="Bouchier C."/>
            <person name="Bouvet O."/>
            <person name="Calteau A."/>
            <person name="Chiapello H."/>
            <person name="Clermont O."/>
            <person name="Cruveiller S."/>
            <person name="Danchin A."/>
            <person name="Diard M."/>
            <person name="Dossat C."/>
            <person name="Karoui M.E."/>
            <person name="Frapy E."/>
            <person name="Garry L."/>
            <person name="Ghigo J.M."/>
            <person name="Gilles A.M."/>
            <person name="Johnson J."/>
            <person name="Le Bouguenec C."/>
            <person name="Lescat M."/>
            <person name="Mangenot S."/>
            <person name="Martinez-Jehanne V."/>
            <person name="Matic I."/>
            <person name="Nassif X."/>
            <person name="Oztas S."/>
            <person name="Petit M.A."/>
            <person name="Pichon C."/>
            <person name="Rouy Z."/>
            <person name="Ruf C.S."/>
            <person name="Schneider D."/>
            <person name="Tourret J."/>
            <person name="Vacherie B."/>
            <person name="Vallenet D."/>
            <person name="Medigue C."/>
            <person name="Rocha E.P.C."/>
            <person name="Denamur E."/>
        </authorList>
    </citation>
    <scope>NUCLEOTIDE SEQUENCE [LARGE SCALE GENOMIC DNA]</scope>
    <source>
        <strain>UMN026 / ExPEC</strain>
    </source>
</reference>
<gene>
    <name evidence="1" type="primary">aas</name>
    <name type="ordered locus">ECUMN_3163</name>
</gene>
<feature type="chain" id="PRO_1000137889" description="Bifunctional protein Aas">
    <location>
        <begin position="1"/>
        <end position="719"/>
    </location>
</feature>
<feature type="transmembrane region" description="Helical" evidence="1">
    <location>
        <begin position="258"/>
        <end position="277"/>
    </location>
</feature>
<feature type="transmembrane region" description="Helical" evidence="1">
    <location>
        <begin position="409"/>
        <end position="433"/>
    </location>
</feature>
<feature type="region of interest" description="Acyltransferase">
    <location>
        <begin position="15"/>
        <end position="138"/>
    </location>
</feature>
<feature type="region of interest" description="AMP-binding">
    <location>
        <begin position="233"/>
        <end position="646"/>
    </location>
</feature>
<feature type="active site" evidence="1">
    <location>
        <position position="36"/>
    </location>
</feature>
<accession>B7N768</accession>
<protein>
    <recommendedName>
        <fullName evidence="1">Bifunctional protein Aas</fullName>
    </recommendedName>
    <domain>
        <recommendedName>
            <fullName evidence="1">2-acylglycerophosphoethanolamine acyltransferase</fullName>
            <ecNumber evidence="1">2.3.1.40</ecNumber>
        </recommendedName>
        <alternativeName>
            <fullName evidence="1">2-acyl-GPE acyltransferase</fullName>
        </alternativeName>
        <alternativeName>
            <fullName evidence="1">Acyl-[acyl-carrier-protein]--phospholipid O-acyltransferase</fullName>
        </alternativeName>
    </domain>
    <domain>
        <recommendedName>
            <fullName evidence="1">Acyl-[acyl-carrier-protein] synthetase</fullName>
            <ecNumber evidence="1">6.2.1.20</ecNumber>
        </recommendedName>
        <alternativeName>
            <fullName evidence="1">Acyl-ACP synthetase</fullName>
        </alternativeName>
        <alternativeName>
            <fullName evidence="1">Long-chain-fatty-acid--[acyl-carrier-protein] ligase</fullName>
        </alternativeName>
    </domain>
</protein>
<dbReference type="EC" id="2.3.1.40" evidence="1"/>
<dbReference type="EC" id="6.2.1.20" evidence="1"/>
<dbReference type="EMBL" id="CU928163">
    <property type="protein sequence ID" value="CAR14329.1"/>
    <property type="molecule type" value="Genomic_DNA"/>
</dbReference>
<dbReference type="RefSeq" id="WP_000899035.1">
    <property type="nucleotide sequence ID" value="NC_011751.1"/>
</dbReference>
<dbReference type="RefSeq" id="YP_002413849.1">
    <property type="nucleotide sequence ID" value="NC_011751.1"/>
</dbReference>
<dbReference type="SMR" id="B7N768"/>
<dbReference type="STRING" id="585056.ECUMN_3163"/>
<dbReference type="KEGG" id="eum:ECUMN_3163"/>
<dbReference type="PATRIC" id="fig|585056.7.peg.3345"/>
<dbReference type="HOGENOM" id="CLU_000022_59_8_6"/>
<dbReference type="Proteomes" id="UP000007097">
    <property type="component" value="Chromosome"/>
</dbReference>
<dbReference type="GO" id="GO:0005886">
    <property type="term" value="C:plasma membrane"/>
    <property type="evidence" value="ECO:0007669"/>
    <property type="project" value="UniProtKB-SubCell"/>
</dbReference>
<dbReference type="GO" id="GO:0008779">
    <property type="term" value="F:acyl-[acyl-carrier-protein]-phospholipid O-acyltransferase activity"/>
    <property type="evidence" value="ECO:0007669"/>
    <property type="project" value="UniProtKB-UniRule"/>
</dbReference>
<dbReference type="GO" id="GO:0005524">
    <property type="term" value="F:ATP binding"/>
    <property type="evidence" value="ECO:0007669"/>
    <property type="project" value="UniProtKB-KW"/>
</dbReference>
<dbReference type="GO" id="GO:0008922">
    <property type="term" value="F:long-chain fatty acid [acyl-carrier-protein] ligase activity"/>
    <property type="evidence" value="ECO:0007669"/>
    <property type="project" value="UniProtKB-UniRule"/>
</dbReference>
<dbReference type="GO" id="GO:0031956">
    <property type="term" value="F:medium-chain fatty acid-CoA ligase activity"/>
    <property type="evidence" value="ECO:0007669"/>
    <property type="project" value="TreeGrafter"/>
</dbReference>
<dbReference type="GO" id="GO:0006631">
    <property type="term" value="P:fatty acid metabolic process"/>
    <property type="evidence" value="ECO:0007669"/>
    <property type="project" value="InterPro"/>
</dbReference>
<dbReference type="GO" id="GO:0008654">
    <property type="term" value="P:phospholipid biosynthetic process"/>
    <property type="evidence" value="ECO:0007669"/>
    <property type="project" value="InterPro"/>
</dbReference>
<dbReference type="CDD" id="cd05909">
    <property type="entry name" value="AAS_C"/>
    <property type="match status" value="1"/>
</dbReference>
<dbReference type="CDD" id="cd07989">
    <property type="entry name" value="LPLAT_AGPAT-like"/>
    <property type="match status" value="1"/>
</dbReference>
<dbReference type="FunFam" id="3.30.300.30:FF:000009">
    <property type="entry name" value="Bifunctional protein Aas"/>
    <property type="match status" value="1"/>
</dbReference>
<dbReference type="FunFam" id="3.40.50.12780:FF:000009">
    <property type="entry name" value="Bifunctional protein Aas"/>
    <property type="match status" value="1"/>
</dbReference>
<dbReference type="Gene3D" id="3.30.300.30">
    <property type="match status" value="1"/>
</dbReference>
<dbReference type="Gene3D" id="3.40.50.12780">
    <property type="entry name" value="N-terminal domain of ligase-like"/>
    <property type="match status" value="1"/>
</dbReference>
<dbReference type="HAMAP" id="MF_01162">
    <property type="entry name" value="Aas"/>
    <property type="match status" value="1"/>
</dbReference>
<dbReference type="InterPro" id="IPR023775">
    <property type="entry name" value="Aas"/>
</dbReference>
<dbReference type="InterPro" id="IPR045851">
    <property type="entry name" value="AMP-bd_C_sf"/>
</dbReference>
<dbReference type="InterPro" id="IPR020845">
    <property type="entry name" value="AMP-binding_CS"/>
</dbReference>
<dbReference type="InterPro" id="IPR000873">
    <property type="entry name" value="AMP-dep_synth/lig_dom"/>
</dbReference>
<dbReference type="InterPro" id="IPR042099">
    <property type="entry name" value="ANL_N_sf"/>
</dbReference>
<dbReference type="InterPro" id="IPR002123">
    <property type="entry name" value="Plipid/glycerol_acylTrfase"/>
</dbReference>
<dbReference type="NCBIfam" id="NF005959">
    <property type="entry name" value="PRK08043.1"/>
    <property type="match status" value="1"/>
</dbReference>
<dbReference type="PANTHER" id="PTHR43201">
    <property type="entry name" value="ACYL-COA SYNTHETASE"/>
    <property type="match status" value="1"/>
</dbReference>
<dbReference type="PANTHER" id="PTHR43201:SF8">
    <property type="entry name" value="ACYL-COA SYNTHETASE FAMILY MEMBER 3"/>
    <property type="match status" value="1"/>
</dbReference>
<dbReference type="Pfam" id="PF01553">
    <property type="entry name" value="Acyltransferase"/>
    <property type="match status" value="1"/>
</dbReference>
<dbReference type="Pfam" id="PF00501">
    <property type="entry name" value="AMP-binding"/>
    <property type="match status" value="1"/>
</dbReference>
<dbReference type="SMART" id="SM00563">
    <property type="entry name" value="PlsC"/>
    <property type="match status" value="1"/>
</dbReference>
<dbReference type="SUPFAM" id="SSF56801">
    <property type="entry name" value="Acetyl-CoA synthetase-like"/>
    <property type="match status" value="1"/>
</dbReference>
<dbReference type="SUPFAM" id="SSF69593">
    <property type="entry name" value="Glycerol-3-phosphate (1)-acyltransferase"/>
    <property type="match status" value="1"/>
</dbReference>
<dbReference type="PROSITE" id="PS00455">
    <property type="entry name" value="AMP_BINDING"/>
    <property type="match status" value="1"/>
</dbReference>
<organism>
    <name type="scientific">Escherichia coli O17:K52:H18 (strain UMN026 / ExPEC)</name>
    <dbReference type="NCBI Taxonomy" id="585056"/>
    <lineage>
        <taxon>Bacteria</taxon>
        <taxon>Pseudomonadati</taxon>
        <taxon>Pseudomonadota</taxon>
        <taxon>Gammaproteobacteria</taxon>
        <taxon>Enterobacterales</taxon>
        <taxon>Enterobacteriaceae</taxon>
        <taxon>Escherichia</taxon>
    </lineage>
</organism>
<comment type="function">
    <text evidence="1">Plays a role in lysophospholipid acylation. Transfers fatty acids to the 1-position via an enzyme-bound acyl-ACP intermediate in the presence of ATP and magnesium. Its physiological function is to regenerate phosphatidylethanolamine from 2-acyl-glycero-3-phosphoethanolamine (2-acyl-GPE) formed by transacylation reactions or degradation by phospholipase A1.</text>
</comment>
<comment type="catalytic activity">
    <reaction evidence="1">
        <text>a 2-acyl-sn-glycero-3-phosphoethanolamine + a fatty acyl-[ACP] = a 1,2-diacyl-sn-glycero-3-phosphoethanolamine + holo-[ACP]</text>
        <dbReference type="Rhea" id="RHEA:10304"/>
        <dbReference type="Rhea" id="RHEA-COMP:9685"/>
        <dbReference type="Rhea" id="RHEA-COMP:14125"/>
        <dbReference type="ChEBI" id="CHEBI:64479"/>
        <dbReference type="ChEBI" id="CHEBI:64612"/>
        <dbReference type="ChEBI" id="CHEBI:65213"/>
        <dbReference type="ChEBI" id="CHEBI:138651"/>
        <dbReference type="EC" id="2.3.1.40"/>
    </reaction>
</comment>
<comment type="catalytic activity">
    <reaction evidence="1">
        <text>a long-chain fatty acid + holo-[ACP] + ATP = a long-chain fatty acyl-[ACP] + AMP + diphosphate</text>
        <dbReference type="Rhea" id="RHEA:45588"/>
        <dbReference type="Rhea" id="RHEA-COMP:9685"/>
        <dbReference type="Rhea" id="RHEA-COMP:12682"/>
        <dbReference type="ChEBI" id="CHEBI:30616"/>
        <dbReference type="ChEBI" id="CHEBI:33019"/>
        <dbReference type="ChEBI" id="CHEBI:57560"/>
        <dbReference type="ChEBI" id="CHEBI:64479"/>
        <dbReference type="ChEBI" id="CHEBI:133243"/>
        <dbReference type="ChEBI" id="CHEBI:456215"/>
        <dbReference type="EC" id="6.2.1.20"/>
    </reaction>
</comment>
<comment type="subcellular location">
    <subcellularLocation>
        <location evidence="1">Cell inner membrane</location>
        <topology evidence="1">Multi-pass membrane protein</topology>
    </subcellularLocation>
</comment>
<comment type="similarity">
    <text evidence="1">In the N-terminal section; belongs to the 2-acyl-GPE acetyltransferase family.</text>
</comment>
<comment type="similarity">
    <text evidence="1">In the C-terminal section; belongs to the ATP-dependent AMP-binding enzyme family.</text>
</comment>
<sequence>MLFSFFRNLCRVLYRVRVTGDTQALKGERVLITPNHVSFIDGILLALFLPVRPVFAVYTSISQQWYMRWLKSFIDFVPLDPTQPMAIKHLVRLVEQGRPVVIFPEGRITTTGSLMKIYDGAGFVAAKSGATVIPVRIEGAELTHFSRLKGLVKRRLFPQITLHILPPTQVEMPDAPRARDRRKIAGEMLHQIMMEARMAVRPRETLYESLLSAMYRFGAGKKCVEDVNFTPDSYRKLLTKTLFVGRILEKYSIEGERIGLMLPNAGISAAVIFGAIARRRIPAMMNYTAGVKGLTSAITAAEIKTIFTSRQFLDKGKLWHLPEQLTQVRWVYLEDLKADVTTADKVWIFSHLLMPRLAQVKQQPEEEALILFTSGSEGHPKGVVHSHKSILANVEQIKTIADFTTNDRFMSALPLFHSFGLTVGLFTPLLTGAEVFLYPSPLHYRIVPELVYDRSCTVLFGTSTFLGHYARFANPYDFYRLRYVVAGAEKLQESTKQLWQDKFGLRILEGYGVTECAPVVSINVPMAAKPGTVGRILPGMDARLLSVPGIEEGGRLQLKGPNIMNGYLRVEKPGVLEVPTAENVRGEMERGWYDTGDIVRFDEQGFVQIQGRAKRFAKIAGEMVSLEMVEQLALGVSPDKVHATAIKSDASKGEALVLFTTDNELTRDKLQQYAREHGVPELAVPRDIRYLKQMPLLGSGKPDFVTLKSWVDEAEQHDE</sequence>
<proteinExistence type="inferred from homology"/>
<name>AAS_ECOLU</name>
<evidence type="ECO:0000255" key="1">
    <source>
        <dbReference type="HAMAP-Rule" id="MF_01162"/>
    </source>
</evidence>
<keyword id="KW-0012">Acyltransferase</keyword>
<keyword id="KW-0067">ATP-binding</keyword>
<keyword id="KW-0997">Cell inner membrane</keyword>
<keyword id="KW-1003">Cell membrane</keyword>
<keyword id="KW-0436">Ligase</keyword>
<keyword id="KW-0472">Membrane</keyword>
<keyword id="KW-0511">Multifunctional enzyme</keyword>
<keyword id="KW-0547">Nucleotide-binding</keyword>
<keyword id="KW-0808">Transferase</keyword>
<keyword id="KW-0812">Transmembrane</keyword>
<keyword id="KW-1133">Transmembrane helix</keyword>